<sequence length="305" mass="34402">MSKRLPPLNALRVFDAAARHLSFTRAAEELFVTQAAVSHQIKSLEDFLGLKLFRRRNRSLLLTEEGQSYFLDIKEIFSQLTEATRKLQARSAKGALTVSLLPSFAIHWLVPRLSSFNSAYPGIDVRIQAVDRQEDKLADDVDVAIFYGRGNWPGLRVEKLYAEYLLPVCSPLLLTGEKPLKTPEDLAKHTLLHDASRRDWQTYTRQLGLNHINVQQGPIFSHSAMVLQAAIHGQGVALANNVMAQSEIEAGRLVCPFNDVLVSKNAFYLVCHDSQAELGKIAAFRQWILAKAAAEQEKFRFRYEQ</sequence>
<comment type="function">
    <text evidence="1">Regulatory protein for the glycine cleavage system operon (gcv). Mediates activation of gcv by glycine and repression by purines. GcvA is negatively autoregulated. Binds to three sites upstream of the gcv promoter (By similarity).</text>
</comment>
<comment type="subcellular location">
    <subcellularLocation>
        <location evidence="3">Cytoplasm</location>
    </subcellularLocation>
</comment>
<comment type="similarity">
    <text evidence="3">Belongs to the LysR transcriptional regulatory family.</text>
</comment>
<feature type="chain" id="PRO_0000105627" description="Glycine cleavage system transcriptional activator">
    <location>
        <begin position="1"/>
        <end position="305"/>
    </location>
</feature>
<feature type="domain" description="HTH lysR-type" evidence="2">
    <location>
        <begin position="6"/>
        <end position="63"/>
    </location>
</feature>
<feature type="DNA-binding region" description="H-T-H motif" evidence="2">
    <location>
        <begin position="23"/>
        <end position="42"/>
    </location>
</feature>
<name>GCVA_ECOL6</name>
<accession>P0A9F7</accession>
<accession>P32064</accession>
<keyword id="KW-0010">Activator</keyword>
<keyword id="KW-0963">Cytoplasm</keyword>
<keyword id="KW-0238">DNA-binding</keyword>
<keyword id="KW-1185">Reference proteome</keyword>
<keyword id="KW-0678">Repressor</keyword>
<keyword id="KW-0804">Transcription</keyword>
<keyword id="KW-0805">Transcription regulation</keyword>
<organism>
    <name type="scientific">Escherichia coli O6:H1 (strain CFT073 / ATCC 700928 / UPEC)</name>
    <dbReference type="NCBI Taxonomy" id="199310"/>
    <lineage>
        <taxon>Bacteria</taxon>
        <taxon>Pseudomonadati</taxon>
        <taxon>Pseudomonadota</taxon>
        <taxon>Gammaproteobacteria</taxon>
        <taxon>Enterobacterales</taxon>
        <taxon>Enterobacteriaceae</taxon>
        <taxon>Escherichia</taxon>
    </lineage>
</organism>
<protein>
    <recommendedName>
        <fullName>Glycine cleavage system transcriptional activator</fullName>
    </recommendedName>
    <alternativeName>
        <fullName>Gcv operon activator</fullName>
    </alternativeName>
</protein>
<dbReference type="EMBL" id="AE014075">
    <property type="protein sequence ID" value="AAN81823.1"/>
    <property type="molecule type" value="Genomic_DNA"/>
</dbReference>
<dbReference type="RefSeq" id="WP_000044401.1">
    <property type="nucleotide sequence ID" value="NZ_CP051263.1"/>
</dbReference>
<dbReference type="SMR" id="P0A9F7"/>
<dbReference type="STRING" id="199310.c3378"/>
<dbReference type="GeneID" id="93779190"/>
<dbReference type="KEGG" id="ecc:c3378"/>
<dbReference type="eggNOG" id="COG0583">
    <property type="taxonomic scope" value="Bacteria"/>
</dbReference>
<dbReference type="HOGENOM" id="CLU_039613_37_1_6"/>
<dbReference type="BioCyc" id="ECOL199310:C3378-MONOMER"/>
<dbReference type="Proteomes" id="UP000001410">
    <property type="component" value="Chromosome"/>
</dbReference>
<dbReference type="GO" id="GO:0005737">
    <property type="term" value="C:cytoplasm"/>
    <property type="evidence" value="ECO:0007669"/>
    <property type="project" value="UniProtKB-SubCell"/>
</dbReference>
<dbReference type="GO" id="GO:0003700">
    <property type="term" value="F:DNA-binding transcription factor activity"/>
    <property type="evidence" value="ECO:0007669"/>
    <property type="project" value="InterPro"/>
</dbReference>
<dbReference type="GO" id="GO:0043565">
    <property type="term" value="F:sequence-specific DNA binding"/>
    <property type="evidence" value="ECO:0007669"/>
    <property type="project" value="TreeGrafter"/>
</dbReference>
<dbReference type="GO" id="GO:0006351">
    <property type="term" value="P:DNA-templated transcription"/>
    <property type="evidence" value="ECO:0007669"/>
    <property type="project" value="TreeGrafter"/>
</dbReference>
<dbReference type="CDD" id="cd08432">
    <property type="entry name" value="PBP2_GcdR_TrpI_HvrB_AmpR_like"/>
    <property type="match status" value="1"/>
</dbReference>
<dbReference type="FunFam" id="1.10.10.10:FF:000038">
    <property type="entry name" value="Glycine cleavage system transcriptional activator"/>
    <property type="match status" value="1"/>
</dbReference>
<dbReference type="FunFam" id="3.40.190.10:FF:000017">
    <property type="entry name" value="Glycine cleavage system transcriptional activator"/>
    <property type="match status" value="1"/>
</dbReference>
<dbReference type="Gene3D" id="3.40.190.10">
    <property type="entry name" value="Periplasmic binding protein-like II"/>
    <property type="match status" value="2"/>
</dbReference>
<dbReference type="Gene3D" id="1.10.10.10">
    <property type="entry name" value="Winged helix-like DNA-binding domain superfamily/Winged helix DNA-binding domain"/>
    <property type="match status" value="1"/>
</dbReference>
<dbReference type="InterPro" id="IPR005119">
    <property type="entry name" value="LysR_subst-bd"/>
</dbReference>
<dbReference type="InterPro" id="IPR000847">
    <property type="entry name" value="Tscrpt_reg_HTH_LysR"/>
</dbReference>
<dbReference type="InterPro" id="IPR036388">
    <property type="entry name" value="WH-like_DNA-bd_sf"/>
</dbReference>
<dbReference type="InterPro" id="IPR036390">
    <property type="entry name" value="WH_DNA-bd_sf"/>
</dbReference>
<dbReference type="NCBIfam" id="NF008352">
    <property type="entry name" value="PRK11139.1"/>
    <property type="match status" value="1"/>
</dbReference>
<dbReference type="PANTHER" id="PTHR30537:SF26">
    <property type="entry name" value="GLYCINE CLEAVAGE SYSTEM TRANSCRIPTIONAL ACTIVATOR"/>
    <property type="match status" value="1"/>
</dbReference>
<dbReference type="PANTHER" id="PTHR30537">
    <property type="entry name" value="HTH-TYPE TRANSCRIPTIONAL REGULATOR"/>
    <property type="match status" value="1"/>
</dbReference>
<dbReference type="Pfam" id="PF00126">
    <property type="entry name" value="HTH_1"/>
    <property type="match status" value="1"/>
</dbReference>
<dbReference type="Pfam" id="PF03466">
    <property type="entry name" value="LysR_substrate"/>
    <property type="match status" value="1"/>
</dbReference>
<dbReference type="PRINTS" id="PR00039">
    <property type="entry name" value="HTHLYSR"/>
</dbReference>
<dbReference type="SUPFAM" id="SSF53850">
    <property type="entry name" value="Periplasmic binding protein-like II"/>
    <property type="match status" value="1"/>
</dbReference>
<dbReference type="SUPFAM" id="SSF46785">
    <property type="entry name" value="Winged helix' DNA-binding domain"/>
    <property type="match status" value="1"/>
</dbReference>
<dbReference type="PROSITE" id="PS50931">
    <property type="entry name" value="HTH_LYSR"/>
    <property type="match status" value="1"/>
</dbReference>
<proteinExistence type="inferred from homology"/>
<evidence type="ECO:0000250" key="1"/>
<evidence type="ECO:0000255" key="2">
    <source>
        <dbReference type="PROSITE-ProRule" id="PRU00253"/>
    </source>
</evidence>
<evidence type="ECO:0000305" key="3"/>
<reference key="1">
    <citation type="journal article" date="2002" name="Proc. Natl. Acad. Sci. U.S.A.">
        <title>Extensive mosaic structure revealed by the complete genome sequence of uropathogenic Escherichia coli.</title>
        <authorList>
            <person name="Welch R.A."/>
            <person name="Burland V."/>
            <person name="Plunkett G. III"/>
            <person name="Redford P."/>
            <person name="Roesch P."/>
            <person name="Rasko D."/>
            <person name="Buckles E.L."/>
            <person name="Liou S.-R."/>
            <person name="Boutin A."/>
            <person name="Hackett J."/>
            <person name="Stroud D."/>
            <person name="Mayhew G.F."/>
            <person name="Rose D.J."/>
            <person name="Zhou S."/>
            <person name="Schwartz D.C."/>
            <person name="Perna N.T."/>
            <person name="Mobley H.L.T."/>
            <person name="Donnenberg M.S."/>
            <person name="Blattner F.R."/>
        </authorList>
    </citation>
    <scope>NUCLEOTIDE SEQUENCE [LARGE SCALE GENOMIC DNA]</scope>
    <source>
        <strain>CFT073 / ATCC 700928 / UPEC</strain>
    </source>
</reference>
<gene>
    <name type="primary">gcvA</name>
    <name type="ordered locus">c3378</name>
</gene>